<name>MENC_SHISS</name>
<gene>
    <name evidence="1" type="primary">menC</name>
    <name type="ordered locus">SSON_2322</name>
</gene>
<comment type="function">
    <text evidence="1">Converts 2-succinyl-6-hydroxy-2,4-cyclohexadiene-1-carboxylate (SHCHC) to 2-succinylbenzoate (OSB).</text>
</comment>
<comment type="catalytic activity">
    <reaction evidence="1">
        <text>(1R,6R)-6-hydroxy-2-succinyl-cyclohexa-2,4-diene-1-carboxylate = 2-succinylbenzoate + H2O</text>
        <dbReference type="Rhea" id="RHEA:10196"/>
        <dbReference type="ChEBI" id="CHEBI:15377"/>
        <dbReference type="ChEBI" id="CHEBI:18325"/>
        <dbReference type="ChEBI" id="CHEBI:58689"/>
        <dbReference type="EC" id="4.2.1.113"/>
    </reaction>
</comment>
<comment type="cofactor">
    <cofactor evidence="1">
        <name>a divalent metal cation</name>
        <dbReference type="ChEBI" id="CHEBI:60240"/>
    </cofactor>
</comment>
<comment type="pathway">
    <text evidence="1">Quinol/quinone metabolism; 1,4-dihydroxy-2-naphthoate biosynthesis; 1,4-dihydroxy-2-naphthoate from chorismate: step 4/7.</text>
</comment>
<comment type="pathway">
    <text evidence="1">Quinol/quinone metabolism; menaquinone biosynthesis.</text>
</comment>
<comment type="similarity">
    <text evidence="1">Belongs to the mandelate racemase/muconate lactonizing enzyme family. MenC type 1 subfamily.</text>
</comment>
<organism>
    <name type="scientific">Shigella sonnei (strain Ss046)</name>
    <dbReference type="NCBI Taxonomy" id="300269"/>
    <lineage>
        <taxon>Bacteria</taxon>
        <taxon>Pseudomonadati</taxon>
        <taxon>Pseudomonadota</taxon>
        <taxon>Gammaproteobacteria</taxon>
        <taxon>Enterobacterales</taxon>
        <taxon>Enterobacteriaceae</taxon>
        <taxon>Shigella</taxon>
    </lineage>
</organism>
<proteinExistence type="inferred from homology"/>
<keyword id="KW-0456">Lyase</keyword>
<keyword id="KW-0460">Magnesium</keyword>
<keyword id="KW-0474">Menaquinone biosynthesis</keyword>
<keyword id="KW-0479">Metal-binding</keyword>
<keyword id="KW-1185">Reference proteome</keyword>
<sequence length="320" mass="35449">MRSAQVYRWQIPMDAGMVLRDRRLKTRDGLYVCLREGEREGWGEISPLPGFSQETWEEAQIVLLAWVNNWLAGDGELPQMPSVAFGVSCALAELADTLPQAANYRAAPLCNGDPDDLILKLADMPGEKVAKVKVGLYEAVRDGMVVNLLLEAIPDLHLRLDANRAWTPLKGQQFAKYVNPDYRHRIAFLEEPCKTRDDSRAFARETGIAIAWDESLREPDFAFVAEEGVRAVVIKPTLTGSLEKVREQVQAAHALGLTAVISSSIESSLGLTQLARIAAWLTPDTIPGLDTLDLMQAQQVRRWPGSPLPLVDADVLEQLL</sequence>
<feature type="chain" id="PRO_1000013814" description="o-succinylbenzoate synthase">
    <location>
        <begin position="1"/>
        <end position="320"/>
    </location>
</feature>
<feature type="active site" description="Proton donor" evidence="1">
    <location>
        <position position="133"/>
    </location>
</feature>
<feature type="active site" description="Proton acceptor" evidence="1">
    <location>
        <position position="235"/>
    </location>
</feature>
<feature type="binding site" evidence="1">
    <location>
        <position position="161"/>
    </location>
    <ligand>
        <name>Mg(2+)</name>
        <dbReference type="ChEBI" id="CHEBI:18420"/>
    </ligand>
</feature>
<feature type="binding site" evidence="1">
    <location>
        <position position="190"/>
    </location>
    <ligand>
        <name>Mg(2+)</name>
        <dbReference type="ChEBI" id="CHEBI:18420"/>
    </ligand>
</feature>
<feature type="binding site" evidence="1">
    <location>
        <position position="213"/>
    </location>
    <ligand>
        <name>Mg(2+)</name>
        <dbReference type="ChEBI" id="CHEBI:18420"/>
    </ligand>
</feature>
<accession>Q3YZU5</accession>
<reference key="1">
    <citation type="journal article" date="2005" name="Nucleic Acids Res.">
        <title>Genome dynamics and diversity of Shigella species, the etiologic agents of bacillary dysentery.</title>
        <authorList>
            <person name="Yang F."/>
            <person name="Yang J."/>
            <person name="Zhang X."/>
            <person name="Chen L."/>
            <person name="Jiang Y."/>
            <person name="Yan Y."/>
            <person name="Tang X."/>
            <person name="Wang J."/>
            <person name="Xiong Z."/>
            <person name="Dong J."/>
            <person name="Xue Y."/>
            <person name="Zhu Y."/>
            <person name="Xu X."/>
            <person name="Sun L."/>
            <person name="Chen S."/>
            <person name="Nie H."/>
            <person name="Peng J."/>
            <person name="Xu J."/>
            <person name="Wang Y."/>
            <person name="Yuan Z."/>
            <person name="Wen Y."/>
            <person name="Yao Z."/>
            <person name="Shen Y."/>
            <person name="Qiang B."/>
            <person name="Hou Y."/>
            <person name="Yu J."/>
            <person name="Jin Q."/>
        </authorList>
    </citation>
    <scope>NUCLEOTIDE SEQUENCE [LARGE SCALE GENOMIC DNA]</scope>
    <source>
        <strain>Ss046</strain>
    </source>
</reference>
<evidence type="ECO:0000255" key="1">
    <source>
        <dbReference type="HAMAP-Rule" id="MF_00470"/>
    </source>
</evidence>
<protein>
    <recommendedName>
        <fullName evidence="1">o-succinylbenzoate synthase</fullName>
        <shortName evidence="1">OSB synthase</shortName>
        <shortName evidence="1">OSBS</shortName>
        <ecNumber evidence="1">4.2.1.113</ecNumber>
    </recommendedName>
    <alternativeName>
        <fullName evidence="1">4-(2'-carboxyphenyl)-4-oxybutyric acid synthase</fullName>
    </alternativeName>
    <alternativeName>
        <fullName evidence="1">o-succinylbenzoic acid synthase</fullName>
    </alternativeName>
</protein>
<dbReference type="EC" id="4.2.1.113" evidence="1"/>
<dbReference type="EMBL" id="CP000038">
    <property type="protein sequence ID" value="AAZ88967.1"/>
    <property type="molecule type" value="Genomic_DNA"/>
</dbReference>
<dbReference type="RefSeq" id="WP_001255542.1">
    <property type="nucleotide sequence ID" value="NC_007384.1"/>
</dbReference>
<dbReference type="SMR" id="Q3YZU5"/>
<dbReference type="GeneID" id="93774912"/>
<dbReference type="KEGG" id="ssn:SSON_2322"/>
<dbReference type="HOGENOM" id="CLU_030273_0_1_6"/>
<dbReference type="UniPathway" id="UPA00079"/>
<dbReference type="UniPathway" id="UPA01057">
    <property type="reaction ID" value="UER00165"/>
</dbReference>
<dbReference type="Proteomes" id="UP000002529">
    <property type="component" value="Chromosome"/>
</dbReference>
<dbReference type="GO" id="GO:0000287">
    <property type="term" value="F:magnesium ion binding"/>
    <property type="evidence" value="ECO:0007669"/>
    <property type="project" value="UniProtKB-UniRule"/>
</dbReference>
<dbReference type="GO" id="GO:0043748">
    <property type="term" value="F:O-succinylbenzoate synthase activity"/>
    <property type="evidence" value="ECO:0007669"/>
    <property type="project" value="UniProtKB-EC"/>
</dbReference>
<dbReference type="GO" id="GO:0009234">
    <property type="term" value="P:menaquinone biosynthetic process"/>
    <property type="evidence" value="ECO:0007669"/>
    <property type="project" value="UniProtKB-UniRule"/>
</dbReference>
<dbReference type="CDD" id="cd03320">
    <property type="entry name" value="OSBS"/>
    <property type="match status" value="1"/>
</dbReference>
<dbReference type="FunFam" id="3.20.20.120:FF:000006">
    <property type="entry name" value="o-succinylbenzoate synthase"/>
    <property type="match status" value="1"/>
</dbReference>
<dbReference type="FunFam" id="3.30.390.10:FF:000005">
    <property type="entry name" value="o-succinylbenzoate synthase"/>
    <property type="match status" value="1"/>
</dbReference>
<dbReference type="Gene3D" id="3.20.20.120">
    <property type="entry name" value="Enolase-like C-terminal domain"/>
    <property type="match status" value="1"/>
</dbReference>
<dbReference type="Gene3D" id="3.30.390.10">
    <property type="entry name" value="Enolase-like, N-terminal domain"/>
    <property type="match status" value="1"/>
</dbReference>
<dbReference type="HAMAP" id="MF_00470">
    <property type="entry name" value="MenC_1"/>
    <property type="match status" value="1"/>
</dbReference>
<dbReference type="InterPro" id="IPR036849">
    <property type="entry name" value="Enolase-like_C_sf"/>
</dbReference>
<dbReference type="InterPro" id="IPR029017">
    <property type="entry name" value="Enolase-like_N"/>
</dbReference>
<dbReference type="InterPro" id="IPR029065">
    <property type="entry name" value="Enolase_C-like"/>
</dbReference>
<dbReference type="InterPro" id="IPR013342">
    <property type="entry name" value="Mandelate_racemase_C"/>
</dbReference>
<dbReference type="InterPro" id="IPR010196">
    <property type="entry name" value="OSB_synthase_MenC1"/>
</dbReference>
<dbReference type="InterPro" id="IPR041338">
    <property type="entry name" value="OSBS_N"/>
</dbReference>
<dbReference type="NCBIfam" id="TIGR01927">
    <property type="entry name" value="menC_gam_Gplu"/>
    <property type="match status" value="1"/>
</dbReference>
<dbReference type="NCBIfam" id="NF003473">
    <property type="entry name" value="PRK05105.1"/>
    <property type="match status" value="1"/>
</dbReference>
<dbReference type="PANTHER" id="PTHR48073:SF2">
    <property type="entry name" value="O-SUCCINYLBENZOATE SYNTHASE"/>
    <property type="match status" value="1"/>
</dbReference>
<dbReference type="PANTHER" id="PTHR48073">
    <property type="entry name" value="O-SUCCINYLBENZOATE SYNTHASE-RELATED"/>
    <property type="match status" value="1"/>
</dbReference>
<dbReference type="Pfam" id="PF21508">
    <property type="entry name" value="MenC_N"/>
    <property type="match status" value="1"/>
</dbReference>
<dbReference type="Pfam" id="PF13378">
    <property type="entry name" value="MR_MLE_C"/>
    <property type="match status" value="1"/>
</dbReference>
<dbReference type="SFLD" id="SFLDS00001">
    <property type="entry name" value="Enolase"/>
    <property type="match status" value="1"/>
</dbReference>
<dbReference type="SFLD" id="SFLDF00009">
    <property type="entry name" value="o-succinylbenzoate_synthase"/>
    <property type="match status" value="1"/>
</dbReference>
<dbReference type="SMART" id="SM00922">
    <property type="entry name" value="MR_MLE"/>
    <property type="match status" value="1"/>
</dbReference>
<dbReference type="SUPFAM" id="SSF51604">
    <property type="entry name" value="Enolase C-terminal domain-like"/>
    <property type="match status" value="1"/>
</dbReference>
<dbReference type="SUPFAM" id="SSF54826">
    <property type="entry name" value="Enolase N-terminal domain-like"/>
    <property type="match status" value="1"/>
</dbReference>